<keyword id="KW-0963">Cytoplasm</keyword>
<keyword id="KW-0255">Endonuclease</keyword>
<keyword id="KW-0378">Hydrolase</keyword>
<keyword id="KW-0464">Manganese</keyword>
<keyword id="KW-0479">Metal-binding</keyword>
<keyword id="KW-0540">Nuclease</keyword>
<protein>
    <recommendedName>
        <fullName evidence="1">Ribonuclease HII</fullName>
        <shortName evidence="1">RNase HII</shortName>
        <ecNumber evidence="1">3.1.26.4</ecNumber>
    </recommendedName>
</protein>
<gene>
    <name evidence="1" type="primary">rnhB</name>
    <name type="ordered locus">Mevan_0684</name>
</gene>
<feature type="chain" id="PRO_0000334982" description="Ribonuclease HII">
    <location>
        <begin position="1"/>
        <end position="244"/>
    </location>
</feature>
<feature type="domain" description="RNase H type-2" evidence="2">
    <location>
        <begin position="23"/>
        <end position="236"/>
    </location>
</feature>
<feature type="binding site" evidence="1">
    <location>
        <position position="29"/>
    </location>
    <ligand>
        <name>a divalent metal cation</name>
        <dbReference type="ChEBI" id="CHEBI:60240"/>
    </ligand>
</feature>
<feature type="binding site" evidence="1">
    <location>
        <position position="30"/>
    </location>
    <ligand>
        <name>a divalent metal cation</name>
        <dbReference type="ChEBI" id="CHEBI:60240"/>
    </ligand>
</feature>
<feature type="binding site" evidence="1">
    <location>
        <position position="130"/>
    </location>
    <ligand>
        <name>a divalent metal cation</name>
        <dbReference type="ChEBI" id="CHEBI:60240"/>
    </ligand>
</feature>
<name>RNH2_METVS</name>
<organism>
    <name type="scientific">Methanococcus vannielii (strain ATCC 35089 / DSM 1224 / JCM 13029 / OCM 148 / SB)</name>
    <dbReference type="NCBI Taxonomy" id="406327"/>
    <lineage>
        <taxon>Archaea</taxon>
        <taxon>Methanobacteriati</taxon>
        <taxon>Methanobacteriota</taxon>
        <taxon>Methanomada group</taxon>
        <taxon>Methanococci</taxon>
        <taxon>Methanococcales</taxon>
        <taxon>Methanococcaceae</taxon>
        <taxon>Methanococcus</taxon>
    </lineage>
</organism>
<reference key="1">
    <citation type="submission" date="2007-06" db="EMBL/GenBank/DDBJ databases">
        <title>Complete sequence of Methanococcus vannielii SB.</title>
        <authorList>
            <consortium name="US DOE Joint Genome Institute"/>
            <person name="Copeland A."/>
            <person name="Lucas S."/>
            <person name="Lapidus A."/>
            <person name="Barry K."/>
            <person name="Glavina del Rio T."/>
            <person name="Dalin E."/>
            <person name="Tice H."/>
            <person name="Pitluck S."/>
            <person name="Chain P."/>
            <person name="Malfatti S."/>
            <person name="Shin M."/>
            <person name="Vergez L."/>
            <person name="Schmutz J."/>
            <person name="Larimer F."/>
            <person name="Land M."/>
            <person name="Hauser L."/>
            <person name="Kyrpides N."/>
            <person name="Anderson I."/>
            <person name="Sieprawska-Lupa M."/>
            <person name="Whitman W.B."/>
            <person name="Richardson P."/>
        </authorList>
    </citation>
    <scope>NUCLEOTIDE SEQUENCE [LARGE SCALE GENOMIC DNA]</scope>
    <source>
        <strain>ATCC 35089 / DSM 1224 / JCM 13029 / OCM 148 / SB</strain>
    </source>
</reference>
<evidence type="ECO:0000255" key="1">
    <source>
        <dbReference type="HAMAP-Rule" id="MF_00052"/>
    </source>
</evidence>
<evidence type="ECO:0000255" key="2">
    <source>
        <dbReference type="PROSITE-ProRule" id="PRU01319"/>
    </source>
</evidence>
<accession>A6UQ18</accession>
<comment type="function">
    <text evidence="1">Endonuclease that specifically degrades the RNA of RNA-DNA hybrids.</text>
</comment>
<comment type="catalytic activity">
    <reaction evidence="1">
        <text>Endonucleolytic cleavage to 5'-phosphomonoester.</text>
        <dbReference type="EC" id="3.1.26.4"/>
    </reaction>
</comment>
<comment type="cofactor">
    <cofactor evidence="1">
        <name>Mn(2+)</name>
        <dbReference type="ChEBI" id="CHEBI:29035"/>
    </cofactor>
    <cofactor evidence="1">
        <name>Mg(2+)</name>
        <dbReference type="ChEBI" id="CHEBI:18420"/>
    </cofactor>
    <text evidence="1">Manganese or magnesium. Binds 1 divalent metal ion per monomer in the absence of substrate. May bind a second metal ion after substrate binding.</text>
</comment>
<comment type="subcellular location">
    <subcellularLocation>
        <location evidence="1">Cytoplasm</location>
    </subcellularLocation>
</comment>
<comment type="similarity">
    <text evidence="1">Belongs to the RNase HII family.</text>
</comment>
<dbReference type="EC" id="3.1.26.4" evidence="1"/>
<dbReference type="EMBL" id="CP000742">
    <property type="protein sequence ID" value="ABR54590.1"/>
    <property type="molecule type" value="Genomic_DNA"/>
</dbReference>
<dbReference type="RefSeq" id="WP_011972492.1">
    <property type="nucleotide sequence ID" value="NC_009634.1"/>
</dbReference>
<dbReference type="SMR" id="A6UQ18"/>
<dbReference type="STRING" id="406327.Mevan_0684"/>
<dbReference type="GeneID" id="5324952"/>
<dbReference type="KEGG" id="mvn:Mevan_0684"/>
<dbReference type="eggNOG" id="arCOG04121">
    <property type="taxonomic scope" value="Archaea"/>
</dbReference>
<dbReference type="HOGENOM" id="CLU_036532_0_4_2"/>
<dbReference type="OrthoDB" id="33866at2157"/>
<dbReference type="Proteomes" id="UP000001107">
    <property type="component" value="Chromosome"/>
</dbReference>
<dbReference type="GO" id="GO:0005737">
    <property type="term" value="C:cytoplasm"/>
    <property type="evidence" value="ECO:0007669"/>
    <property type="project" value="UniProtKB-SubCell"/>
</dbReference>
<dbReference type="GO" id="GO:0032299">
    <property type="term" value="C:ribonuclease H2 complex"/>
    <property type="evidence" value="ECO:0007669"/>
    <property type="project" value="TreeGrafter"/>
</dbReference>
<dbReference type="GO" id="GO:0030145">
    <property type="term" value="F:manganese ion binding"/>
    <property type="evidence" value="ECO:0007669"/>
    <property type="project" value="UniProtKB-UniRule"/>
</dbReference>
<dbReference type="GO" id="GO:0003723">
    <property type="term" value="F:RNA binding"/>
    <property type="evidence" value="ECO:0007669"/>
    <property type="project" value="InterPro"/>
</dbReference>
<dbReference type="GO" id="GO:0004523">
    <property type="term" value="F:RNA-DNA hybrid ribonuclease activity"/>
    <property type="evidence" value="ECO:0007669"/>
    <property type="project" value="UniProtKB-UniRule"/>
</dbReference>
<dbReference type="GO" id="GO:0043137">
    <property type="term" value="P:DNA replication, removal of RNA primer"/>
    <property type="evidence" value="ECO:0007669"/>
    <property type="project" value="TreeGrafter"/>
</dbReference>
<dbReference type="GO" id="GO:0006298">
    <property type="term" value="P:mismatch repair"/>
    <property type="evidence" value="ECO:0007669"/>
    <property type="project" value="TreeGrafter"/>
</dbReference>
<dbReference type="CDD" id="cd07180">
    <property type="entry name" value="RNase_HII_archaea_like"/>
    <property type="match status" value="1"/>
</dbReference>
<dbReference type="FunFam" id="1.10.10.460:FF:000001">
    <property type="entry name" value="Ribonuclease"/>
    <property type="match status" value="1"/>
</dbReference>
<dbReference type="Gene3D" id="3.30.420.10">
    <property type="entry name" value="Ribonuclease H-like superfamily/Ribonuclease H"/>
    <property type="match status" value="1"/>
</dbReference>
<dbReference type="Gene3D" id="1.10.10.460">
    <property type="entry name" value="Ribonuclease hii. Domain 2"/>
    <property type="match status" value="1"/>
</dbReference>
<dbReference type="HAMAP" id="MF_00052_A">
    <property type="entry name" value="RNase_HII_A"/>
    <property type="match status" value="1"/>
</dbReference>
<dbReference type="InterPro" id="IPR004649">
    <property type="entry name" value="RNase_H2_suA"/>
</dbReference>
<dbReference type="InterPro" id="IPR001352">
    <property type="entry name" value="RNase_HII/HIII"/>
</dbReference>
<dbReference type="InterPro" id="IPR024567">
    <property type="entry name" value="RNase_HII/HIII_dom"/>
</dbReference>
<dbReference type="InterPro" id="IPR020787">
    <property type="entry name" value="RNase_HII_arc"/>
</dbReference>
<dbReference type="InterPro" id="IPR023160">
    <property type="entry name" value="RNase_HII_hlx-loop-hlx_cap_dom"/>
</dbReference>
<dbReference type="InterPro" id="IPR012337">
    <property type="entry name" value="RNaseH-like_sf"/>
</dbReference>
<dbReference type="InterPro" id="IPR036397">
    <property type="entry name" value="RNaseH_sf"/>
</dbReference>
<dbReference type="NCBIfam" id="TIGR00729">
    <property type="entry name" value="ribonuclease HII"/>
    <property type="match status" value="1"/>
</dbReference>
<dbReference type="PANTHER" id="PTHR10954:SF23">
    <property type="entry name" value="RIBONUCLEASE"/>
    <property type="match status" value="1"/>
</dbReference>
<dbReference type="PANTHER" id="PTHR10954">
    <property type="entry name" value="RIBONUCLEASE H2 SUBUNIT A"/>
    <property type="match status" value="1"/>
</dbReference>
<dbReference type="Pfam" id="PF01351">
    <property type="entry name" value="RNase_HII"/>
    <property type="match status" value="1"/>
</dbReference>
<dbReference type="SUPFAM" id="SSF53098">
    <property type="entry name" value="Ribonuclease H-like"/>
    <property type="match status" value="1"/>
</dbReference>
<dbReference type="PROSITE" id="PS51975">
    <property type="entry name" value="RNASE_H_2"/>
    <property type="match status" value="1"/>
</dbReference>
<sequence>MNKNYKNNLNESINNPSKILNEKIILGLDEAGRGPVLGPMVISVVKVTEKDLDKINSLDLKDSKQLTKKRREEYYNIINECFEVQKIVLAPEKIDEYMKTSNLNKIELSAFSKLSNHFLKEYENVKIFIDACSSSEQSFLNQFKAKLINKKVEIIAEHKADEKYKIVSAASIIAKVTRDNIIESYKEEFGDIGSGYPGDPKTKEFLKRFVKEHKKLPKIARGSWATSKKLLKEFEESKLHKWVK</sequence>
<proteinExistence type="inferred from homology"/>